<gene>
    <name type="primary">ddl</name>
    <name type="ordered locus">EF_0843</name>
</gene>
<protein>
    <recommendedName>
        <fullName>D-alanine--D-alanine ligase</fullName>
        <ecNumber>6.3.2.4</ecNumber>
    </recommendedName>
    <alternativeName>
        <fullName>D-Ala-D-Ala ligase</fullName>
    </alternativeName>
    <alternativeName>
        <fullName>D-alanylalanine synthetase</fullName>
    </alternativeName>
</protein>
<comment type="function">
    <text evidence="1">Cell wall formation.</text>
</comment>
<comment type="catalytic activity">
    <reaction>
        <text>2 D-alanine + ATP = D-alanyl-D-alanine + ADP + phosphate + H(+)</text>
        <dbReference type="Rhea" id="RHEA:11224"/>
        <dbReference type="ChEBI" id="CHEBI:15378"/>
        <dbReference type="ChEBI" id="CHEBI:30616"/>
        <dbReference type="ChEBI" id="CHEBI:43474"/>
        <dbReference type="ChEBI" id="CHEBI:57416"/>
        <dbReference type="ChEBI" id="CHEBI:57822"/>
        <dbReference type="ChEBI" id="CHEBI:456216"/>
        <dbReference type="EC" id="6.3.2.4"/>
    </reaction>
</comment>
<comment type="cofactor">
    <cofactor evidence="1">
        <name>Mg(2+)</name>
        <dbReference type="ChEBI" id="CHEBI:18420"/>
    </cofactor>
    <cofactor evidence="1">
        <name>Mn(2+)</name>
        <dbReference type="ChEBI" id="CHEBI:29035"/>
    </cofactor>
    <text evidence="1">Binds 2 magnesium or manganese ions per subunit.</text>
</comment>
<comment type="pathway">
    <text>Cell wall biogenesis; peptidoglycan biosynthesis.</text>
</comment>
<comment type="subcellular location">
    <subcellularLocation>
        <location evidence="1">Cytoplasm</location>
    </subcellularLocation>
</comment>
<comment type="similarity">
    <text evidence="2">Belongs to the D-alanine--D-alanine ligase family.</text>
</comment>
<keyword id="KW-0067">ATP-binding</keyword>
<keyword id="KW-0133">Cell shape</keyword>
<keyword id="KW-0961">Cell wall biogenesis/degradation</keyword>
<keyword id="KW-0963">Cytoplasm</keyword>
<keyword id="KW-0436">Ligase</keyword>
<keyword id="KW-0460">Magnesium</keyword>
<keyword id="KW-0464">Manganese</keyword>
<keyword id="KW-0479">Metal-binding</keyword>
<keyword id="KW-0547">Nucleotide-binding</keyword>
<keyword id="KW-0573">Peptidoglycan synthesis</keyword>
<keyword id="KW-1185">Reference proteome</keyword>
<reference key="1">
    <citation type="journal article" date="1994" name="Gene">
        <title>Sequence of the vanB and ddl genes encoding D-alanine:D-lactate and D-alanine:D-alanine ligases in vancomycin-resistant Enterococcus faecalis V583.</title>
        <authorList>
            <person name="Evers S."/>
            <person name="Reynolds P.E."/>
            <person name="Courvalin P."/>
        </authorList>
    </citation>
    <scope>NUCLEOTIDE SEQUENCE [GENOMIC DNA]</scope>
    <source>
        <strain>ATCC 700802 / V583</strain>
    </source>
</reference>
<reference key="2">
    <citation type="journal article" date="2003" name="Science">
        <title>Role of mobile DNA in the evolution of vancomycin-resistant Enterococcus faecalis.</title>
        <authorList>
            <person name="Paulsen I.T."/>
            <person name="Banerjei L."/>
            <person name="Myers G.S.A."/>
            <person name="Nelson K.E."/>
            <person name="Seshadri R."/>
            <person name="Read T.D."/>
            <person name="Fouts D.E."/>
            <person name="Eisen J.A."/>
            <person name="Gill S.R."/>
            <person name="Heidelberg J.F."/>
            <person name="Tettelin H."/>
            <person name="Dodson R.J."/>
            <person name="Umayam L.A."/>
            <person name="Brinkac L.M."/>
            <person name="Beanan M.J."/>
            <person name="Daugherty S.C."/>
            <person name="DeBoy R.T."/>
            <person name="Durkin S.A."/>
            <person name="Kolonay J.F."/>
            <person name="Madupu R."/>
            <person name="Nelson W.C."/>
            <person name="Vamathevan J.J."/>
            <person name="Tran B."/>
            <person name="Upton J."/>
            <person name="Hansen T."/>
            <person name="Shetty J."/>
            <person name="Khouri H.M."/>
            <person name="Utterback T.R."/>
            <person name="Radune D."/>
            <person name="Ketchum K.A."/>
            <person name="Dougherty B.A."/>
            <person name="Fraser C.M."/>
        </authorList>
    </citation>
    <scope>NUCLEOTIDE SEQUENCE [LARGE SCALE GENOMIC DNA]</scope>
    <source>
        <strain>ATCC 700802 / V583</strain>
    </source>
</reference>
<proteinExistence type="inferred from homology"/>
<accession>Q47758</accession>
<feature type="chain" id="PRO_0000177821" description="D-alanine--D-alanine ligase">
    <location>
        <begin position="1"/>
        <end position="348"/>
    </location>
</feature>
<feature type="domain" description="ATP-grasp">
    <location>
        <begin position="136"/>
        <end position="341"/>
    </location>
</feature>
<feature type="binding site" evidence="1">
    <location>
        <begin position="169"/>
        <end position="224"/>
    </location>
    <ligand>
        <name>ATP</name>
        <dbReference type="ChEBI" id="CHEBI:30616"/>
    </ligand>
</feature>
<feature type="binding site" evidence="1">
    <location>
        <position position="295"/>
    </location>
    <ligand>
        <name>Mg(2+)</name>
        <dbReference type="ChEBI" id="CHEBI:18420"/>
        <label>1</label>
    </ligand>
</feature>
<feature type="binding site" evidence="1">
    <location>
        <position position="308"/>
    </location>
    <ligand>
        <name>Mg(2+)</name>
        <dbReference type="ChEBI" id="CHEBI:18420"/>
        <label>1</label>
    </ligand>
</feature>
<feature type="binding site" evidence="1">
    <location>
        <position position="308"/>
    </location>
    <ligand>
        <name>Mg(2+)</name>
        <dbReference type="ChEBI" id="CHEBI:18420"/>
        <label>2</label>
    </ligand>
</feature>
<feature type="binding site" evidence="1">
    <location>
        <position position="310"/>
    </location>
    <ligand>
        <name>Mg(2+)</name>
        <dbReference type="ChEBI" id="CHEBI:18420"/>
        <label>2</label>
    </ligand>
</feature>
<feature type="sequence conflict" description="In Ref. 1; AAC43218." evidence="2" ref="1">
    <original>A</original>
    <variation>V</variation>
    <location>
        <position position="127"/>
    </location>
</feature>
<dbReference type="EC" id="6.3.2.4"/>
<dbReference type="EMBL" id="U00457">
    <property type="protein sequence ID" value="AAC43218.2"/>
    <property type="molecule type" value="Genomic_DNA"/>
</dbReference>
<dbReference type="EMBL" id="AE016830">
    <property type="protein sequence ID" value="AAO80655.1"/>
    <property type="molecule type" value="Genomic_DNA"/>
</dbReference>
<dbReference type="RefSeq" id="NP_814585.1">
    <property type="nucleotide sequence ID" value="NC_004668.1"/>
</dbReference>
<dbReference type="RefSeq" id="WP_010774177.1">
    <property type="nucleotide sequence ID" value="NZ_KE136527.1"/>
</dbReference>
<dbReference type="SMR" id="Q47758"/>
<dbReference type="STRING" id="226185.EF_0843"/>
<dbReference type="BindingDB" id="Q47758"/>
<dbReference type="ChEMBL" id="CHEMBL4523951"/>
<dbReference type="EnsemblBacteria" id="AAO80655">
    <property type="protein sequence ID" value="AAO80655"/>
    <property type="gene ID" value="EF_0843"/>
</dbReference>
<dbReference type="KEGG" id="efa:EF0843"/>
<dbReference type="PATRIC" id="fig|226185.46.peg.1249"/>
<dbReference type="eggNOG" id="COG1181">
    <property type="taxonomic scope" value="Bacteria"/>
</dbReference>
<dbReference type="HOGENOM" id="CLU_039268_0_0_9"/>
<dbReference type="UniPathway" id="UPA00219"/>
<dbReference type="Proteomes" id="UP000001415">
    <property type="component" value="Chromosome"/>
</dbReference>
<dbReference type="GO" id="GO:0005829">
    <property type="term" value="C:cytosol"/>
    <property type="evidence" value="ECO:0007669"/>
    <property type="project" value="TreeGrafter"/>
</dbReference>
<dbReference type="GO" id="GO:0005524">
    <property type="term" value="F:ATP binding"/>
    <property type="evidence" value="ECO:0007669"/>
    <property type="project" value="UniProtKB-KW"/>
</dbReference>
<dbReference type="GO" id="GO:0008716">
    <property type="term" value="F:D-alanine-D-alanine ligase activity"/>
    <property type="evidence" value="ECO:0007669"/>
    <property type="project" value="UniProtKB-UniRule"/>
</dbReference>
<dbReference type="GO" id="GO:0046872">
    <property type="term" value="F:metal ion binding"/>
    <property type="evidence" value="ECO:0007669"/>
    <property type="project" value="UniProtKB-KW"/>
</dbReference>
<dbReference type="GO" id="GO:0071555">
    <property type="term" value="P:cell wall organization"/>
    <property type="evidence" value="ECO:0007669"/>
    <property type="project" value="UniProtKB-KW"/>
</dbReference>
<dbReference type="GO" id="GO:0009252">
    <property type="term" value="P:peptidoglycan biosynthetic process"/>
    <property type="evidence" value="ECO:0007669"/>
    <property type="project" value="UniProtKB-UniRule"/>
</dbReference>
<dbReference type="GO" id="GO:0008360">
    <property type="term" value="P:regulation of cell shape"/>
    <property type="evidence" value="ECO:0007669"/>
    <property type="project" value="UniProtKB-KW"/>
</dbReference>
<dbReference type="FunFam" id="3.30.1490.20:FF:000007">
    <property type="entry name" value="D-alanine--D-alanine ligase"/>
    <property type="match status" value="1"/>
</dbReference>
<dbReference type="FunFam" id="3.30.470.20:FF:000008">
    <property type="entry name" value="D-alanine--D-alanine ligase"/>
    <property type="match status" value="1"/>
</dbReference>
<dbReference type="Gene3D" id="3.40.50.20">
    <property type="match status" value="1"/>
</dbReference>
<dbReference type="Gene3D" id="3.30.1490.20">
    <property type="entry name" value="ATP-grasp fold, A domain"/>
    <property type="match status" value="1"/>
</dbReference>
<dbReference type="Gene3D" id="3.30.470.20">
    <property type="entry name" value="ATP-grasp fold, B domain"/>
    <property type="match status" value="1"/>
</dbReference>
<dbReference type="HAMAP" id="MF_00047">
    <property type="entry name" value="Dala_Dala_lig"/>
    <property type="match status" value="1"/>
</dbReference>
<dbReference type="InterPro" id="IPR011761">
    <property type="entry name" value="ATP-grasp"/>
</dbReference>
<dbReference type="InterPro" id="IPR013815">
    <property type="entry name" value="ATP_grasp_subdomain_1"/>
</dbReference>
<dbReference type="InterPro" id="IPR000291">
    <property type="entry name" value="D-Ala_lig_Van_CS"/>
</dbReference>
<dbReference type="InterPro" id="IPR005905">
    <property type="entry name" value="D_ala_D_ala"/>
</dbReference>
<dbReference type="InterPro" id="IPR011095">
    <property type="entry name" value="Dala_Dala_lig_C"/>
</dbReference>
<dbReference type="InterPro" id="IPR011127">
    <property type="entry name" value="Dala_Dala_lig_N"/>
</dbReference>
<dbReference type="InterPro" id="IPR016185">
    <property type="entry name" value="PreATP-grasp_dom_sf"/>
</dbReference>
<dbReference type="NCBIfam" id="TIGR01205">
    <property type="entry name" value="D_ala_D_alaTIGR"/>
    <property type="match status" value="1"/>
</dbReference>
<dbReference type="NCBIfam" id="NF002526">
    <property type="entry name" value="PRK01966.1-2"/>
    <property type="match status" value="1"/>
</dbReference>
<dbReference type="NCBIfam" id="NF002528">
    <property type="entry name" value="PRK01966.1-4"/>
    <property type="match status" value="1"/>
</dbReference>
<dbReference type="NCBIfam" id="NF002529">
    <property type="entry name" value="PRK01966.1-5"/>
    <property type="match status" value="1"/>
</dbReference>
<dbReference type="PANTHER" id="PTHR23132">
    <property type="entry name" value="D-ALANINE--D-ALANINE LIGASE"/>
    <property type="match status" value="1"/>
</dbReference>
<dbReference type="PANTHER" id="PTHR23132:SF25">
    <property type="entry name" value="D-ALANINE--D-ALANINE LIGASE A"/>
    <property type="match status" value="1"/>
</dbReference>
<dbReference type="Pfam" id="PF07478">
    <property type="entry name" value="Dala_Dala_lig_C"/>
    <property type="match status" value="1"/>
</dbReference>
<dbReference type="Pfam" id="PF01820">
    <property type="entry name" value="Dala_Dala_lig_N"/>
    <property type="match status" value="1"/>
</dbReference>
<dbReference type="PIRSF" id="PIRSF039102">
    <property type="entry name" value="Ddl/VanB"/>
    <property type="match status" value="1"/>
</dbReference>
<dbReference type="SUPFAM" id="SSF56059">
    <property type="entry name" value="Glutathione synthetase ATP-binding domain-like"/>
    <property type="match status" value="1"/>
</dbReference>
<dbReference type="SUPFAM" id="SSF52440">
    <property type="entry name" value="PreATP-grasp domain"/>
    <property type="match status" value="1"/>
</dbReference>
<dbReference type="PROSITE" id="PS50975">
    <property type="entry name" value="ATP_GRASP"/>
    <property type="match status" value="1"/>
</dbReference>
<dbReference type="PROSITE" id="PS00843">
    <property type="entry name" value="DALA_DALA_LIGASE_1"/>
    <property type="match status" value="1"/>
</dbReference>
<dbReference type="PROSITE" id="PS00844">
    <property type="entry name" value="DALA_DALA_LIGASE_2"/>
    <property type="match status" value="1"/>
</dbReference>
<sequence length="348" mass="39340">MKIILLYGGRSEEHDVSVLSAYSVLNAIYYKYYQVQLVFISKDGQWVKGPLLSERPQNKEVLHLTWAQTPEETGEFSGKRISPSEIYEEEAIVFPVLHGPNGEDGTIQGFMETINMPYVGAGVLASANAMDKIMTKYLLQTVGIPQVPFVPVLRSDWKGNPKEVFEKCEGSLIYPVFVKPANMGSSVGISKVENREELQEALEEAFRYDARAIVEQGIEAREIEVAILGNEDVRTTLPGEVVKDVAFYDYDAKYINNTIEMQIPAHVPEEVAHQAQEYAKKAYIMLDGSGLSRCDFFLTSKNELFLNELNTMPGFTDFSMYPLLWENMGLKYSDLIEELIQLALNRFK</sequence>
<organism>
    <name type="scientific">Enterococcus faecalis (strain ATCC 700802 / V583)</name>
    <dbReference type="NCBI Taxonomy" id="226185"/>
    <lineage>
        <taxon>Bacteria</taxon>
        <taxon>Bacillati</taxon>
        <taxon>Bacillota</taxon>
        <taxon>Bacilli</taxon>
        <taxon>Lactobacillales</taxon>
        <taxon>Enterococcaceae</taxon>
        <taxon>Enterococcus</taxon>
    </lineage>
</organism>
<name>DDL_ENTFA</name>
<evidence type="ECO:0000250" key="1"/>
<evidence type="ECO:0000305" key="2"/>